<reference key="1">
    <citation type="submission" date="2008-06" db="EMBL/GenBank/DDBJ databases">
        <title>Complete sequence of chromosome of Prosthecochloris aestuarii DSM 271.</title>
        <authorList>
            <consortium name="US DOE Joint Genome Institute"/>
            <person name="Lucas S."/>
            <person name="Copeland A."/>
            <person name="Lapidus A."/>
            <person name="Glavina del Rio T."/>
            <person name="Dalin E."/>
            <person name="Tice H."/>
            <person name="Bruce D."/>
            <person name="Goodwin L."/>
            <person name="Pitluck S."/>
            <person name="Schmutz J."/>
            <person name="Larimer F."/>
            <person name="Land M."/>
            <person name="Hauser L."/>
            <person name="Kyrpides N."/>
            <person name="Anderson I."/>
            <person name="Liu Z."/>
            <person name="Li T."/>
            <person name="Zhao F."/>
            <person name="Overmann J."/>
            <person name="Bryant D.A."/>
            <person name="Richardson P."/>
        </authorList>
    </citation>
    <scope>NUCLEOTIDE SEQUENCE [LARGE SCALE GENOMIC DNA]</scope>
    <source>
        <strain>DSM 271 / SK 413</strain>
    </source>
</reference>
<comment type="similarity">
    <text evidence="1">Belongs to the bacterial ribosomal protein bL35 family.</text>
</comment>
<proteinExistence type="inferred from homology"/>
<accession>B4S3D0</accession>
<feature type="chain" id="PRO_1000127391" description="Large ribosomal subunit protein bL35">
    <location>
        <begin position="1"/>
        <end position="64"/>
    </location>
</feature>
<feature type="region of interest" description="Disordered" evidence="2">
    <location>
        <begin position="1"/>
        <end position="64"/>
    </location>
</feature>
<feature type="compositionally biased region" description="Basic residues" evidence="2">
    <location>
        <begin position="1"/>
        <end position="24"/>
    </location>
</feature>
<feature type="compositionally biased region" description="Basic and acidic residues" evidence="2">
    <location>
        <begin position="25"/>
        <end position="35"/>
    </location>
</feature>
<feature type="compositionally biased region" description="Basic residues" evidence="2">
    <location>
        <begin position="36"/>
        <end position="45"/>
    </location>
</feature>
<organism>
    <name type="scientific">Prosthecochloris aestuarii (strain DSM 271 / SK 413)</name>
    <dbReference type="NCBI Taxonomy" id="290512"/>
    <lineage>
        <taxon>Bacteria</taxon>
        <taxon>Pseudomonadati</taxon>
        <taxon>Chlorobiota</taxon>
        <taxon>Chlorobiia</taxon>
        <taxon>Chlorobiales</taxon>
        <taxon>Chlorobiaceae</taxon>
        <taxon>Prosthecochloris</taxon>
    </lineage>
</organism>
<keyword id="KW-0687">Ribonucleoprotein</keyword>
<keyword id="KW-0689">Ribosomal protein</keyword>
<protein>
    <recommendedName>
        <fullName evidence="1">Large ribosomal subunit protein bL35</fullName>
    </recommendedName>
    <alternativeName>
        <fullName evidence="3">50S ribosomal protein L35</fullName>
    </alternativeName>
</protein>
<name>RL35_PROA2</name>
<dbReference type="EMBL" id="CP001108">
    <property type="protein sequence ID" value="ACF45224.1"/>
    <property type="molecule type" value="Genomic_DNA"/>
</dbReference>
<dbReference type="RefSeq" id="WP_012504761.1">
    <property type="nucleotide sequence ID" value="NC_011059.1"/>
</dbReference>
<dbReference type="SMR" id="B4S3D0"/>
<dbReference type="STRING" id="290512.Paes_0165"/>
<dbReference type="KEGG" id="paa:Paes_0165"/>
<dbReference type="eggNOG" id="COG0291">
    <property type="taxonomic scope" value="Bacteria"/>
</dbReference>
<dbReference type="HOGENOM" id="CLU_169643_4_3_10"/>
<dbReference type="Proteomes" id="UP000002725">
    <property type="component" value="Chromosome"/>
</dbReference>
<dbReference type="GO" id="GO:0022625">
    <property type="term" value="C:cytosolic large ribosomal subunit"/>
    <property type="evidence" value="ECO:0007669"/>
    <property type="project" value="TreeGrafter"/>
</dbReference>
<dbReference type="GO" id="GO:0003735">
    <property type="term" value="F:structural constituent of ribosome"/>
    <property type="evidence" value="ECO:0007669"/>
    <property type="project" value="InterPro"/>
</dbReference>
<dbReference type="GO" id="GO:0006412">
    <property type="term" value="P:translation"/>
    <property type="evidence" value="ECO:0007669"/>
    <property type="project" value="UniProtKB-UniRule"/>
</dbReference>
<dbReference type="FunFam" id="4.10.410.60:FF:000001">
    <property type="entry name" value="50S ribosomal protein L35"/>
    <property type="match status" value="1"/>
</dbReference>
<dbReference type="Gene3D" id="4.10.410.60">
    <property type="match status" value="1"/>
</dbReference>
<dbReference type="HAMAP" id="MF_00514">
    <property type="entry name" value="Ribosomal_bL35"/>
    <property type="match status" value="1"/>
</dbReference>
<dbReference type="InterPro" id="IPR001706">
    <property type="entry name" value="Ribosomal_bL35"/>
</dbReference>
<dbReference type="InterPro" id="IPR021137">
    <property type="entry name" value="Ribosomal_bL35-like"/>
</dbReference>
<dbReference type="InterPro" id="IPR018265">
    <property type="entry name" value="Ribosomal_bL35_CS"/>
</dbReference>
<dbReference type="InterPro" id="IPR037229">
    <property type="entry name" value="Ribosomal_bL35_sf"/>
</dbReference>
<dbReference type="NCBIfam" id="TIGR00001">
    <property type="entry name" value="rpmI_bact"/>
    <property type="match status" value="1"/>
</dbReference>
<dbReference type="PANTHER" id="PTHR33343">
    <property type="entry name" value="54S RIBOSOMAL PROTEIN BL35M"/>
    <property type="match status" value="1"/>
</dbReference>
<dbReference type="PANTHER" id="PTHR33343:SF1">
    <property type="entry name" value="LARGE RIBOSOMAL SUBUNIT PROTEIN BL35M"/>
    <property type="match status" value="1"/>
</dbReference>
<dbReference type="Pfam" id="PF01632">
    <property type="entry name" value="Ribosomal_L35p"/>
    <property type="match status" value="1"/>
</dbReference>
<dbReference type="PRINTS" id="PR00064">
    <property type="entry name" value="RIBOSOMALL35"/>
</dbReference>
<dbReference type="SUPFAM" id="SSF143034">
    <property type="entry name" value="L35p-like"/>
    <property type="match status" value="1"/>
</dbReference>
<dbReference type="PROSITE" id="PS00936">
    <property type="entry name" value="RIBOSOMAL_L35"/>
    <property type="match status" value="1"/>
</dbReference>
<gene>
    <name evidence="1" type="primary">rpmI</name>
    <name type="ordered locus">Paes_0165</name>
</gene>
<sequence length="64" mass="7625">MPKMKSHRGACKRFKKTASGKVKRERMYGSHNLEKKNRKRTRRLHQSTLVDSTQEKQIKRMILA</sequence>
<evidence type="ECO:0000255" key="1">
    <source>
        <dbReference type="HAMAP-Rule" id="MF_00514"/>
    </source>
</evidence>
<evidence type="ECO:0000256" key="2">
    <source>
        <dbReference type="SAM" id="MobiDB-lite"/>
    </source>
</evidence>
<evidence type="ECO:0000305" key="3"/>